<protein>
    <recommendedName>
        <fullName>Apolipoprotein E</fullName>
        <shortName>Apo-E</shortName>
    </recommendedName>
</protein>
<name>APOE_ZALCA</name>
<gene>
    <name type="primary">APOE</name>
</gene>
<accession>Q7M2U7</accession>
<comment type="function">
    <text evidence="1">APOE is an apolipoprotein, a protein associating with lipid particles, that mainly functions in lipoprotein-mediated lipid transport between organs via the plasma and interstitial fluids. APOE is a core component of plasma lipoproteins and is involved in their production, conversion and clearance. Apolipoproteins are amphipathic molecules that interact both with lipids of the lipoprotein particle core and the aqueous environment of the plasma. As such, APOE associates with chylomicrons, chylomicron remnants, very low density lipoproteins (VLDL) and intermediate density lipoproteins (IDL) but shows a preferential binding to high-density lipoproteins (HDL). It also binds a wide range of cellular receptors including the LDL receptor/LDLR and the very low-density lipoprotein receptor/VLDLR that mediate the cellular uptake of the APOE-containing lipoprotein particles. Finally, APOE also has a heparin-binding activity and binds heparan-sulfate proteoglycans on the surface of cells, a property that supports the capture and the receptor-mediated uptake of APOE-containing lipoproteins by cells.</text>
</comment>
<comment type="subunit">
    <text evidence="1">Homotetramer. May interact with ABCA1; functionally associated with ABCA1 in the biogenesis of HDLs. May interact with APP/A4 amyloid-beta peptide; the interaction is extremely stable in vitro but its physiological significance is unclear. May interact with MAPT. May interact with MAP2. In the cerebrospinal fluid, interacts with secreted SORL1. Interacts with PMEL; this allows the loading of PMEL luminal fragment on ILVs to induce fibril nucleation.</text>
</comment>
<comment type="subcellular location">
    <subcellularLocation>
        <location evidence="1">Secreted</location>
    </subcellularLocation>
    <subcellularLocation>
        <location evidence="1">Secreted</location>
        <location evidence="1">Extracellular space</location>
    </subcellularLocation>
    <subcellularLocation>
        <location evidence="1">Secreted</location>
        <location evidence="1">Extracellular space</location>
        <location evidence="1">Extracellular matrix</location>
    </subcellularLocation>
    <subcellularLocation>
        <location evidence="1">Extracellular vesicle</location>
    </subcellularLocation>
    <subcellularLocation>
        <location evidence="1">Endosome</location>
        <location evidence="1">Multivesicular body</location>
    </subcellularLocation>
    <text evidence="1">In the plasma, APOE is associated with chylomicrons, chylomicrons remnants, VLDL, LDL and HDL lipoproteins. Lipid poor oligomeric APOE is associated with the extracellular matrix in a calcium- and heparan-sulfate proteoglycans-dependent manner. Lipidation induces the release from the extracellular matrix. Colocalizes with CD63 and PMEL at exosomes and in intraluminal vesicles within multivesicular endosomes.</text>
</comment>
<comment type="PTM">
    <text evidence="1">APOE exists as multiple glycosylated and sialylated glycoforms within cells and in plasma. The extent of glycosylation and sialylation are tissue and context specific.</text>
</comment>
<comment type="PTM">
    <text evidence="1">Glycated in plasma VLDL.</text>
</comment>
<comment type="PTM">
    <text evidence="1">Phosphorylated by FAM20C in the extracellular medium.</text>
</comment>
<comment type="similarity">
    <text evidence="4">Belongs to the apolipoprotein A1/A4/E family.</text>
</comment>
<keyword id="KW-0162">Chylomicron</keyword>
<keyword id="KW-0967">Endosome</keyword>
<keyword id="KW-0272">Extracellular matrix</keyword>
<keyword id="KW-0325">Glycoprotein</keyword>
<keyword id="KW-0345">HDL</keyword>
<keyword id="KW-0358">Heparin-binding</keyword>
<keyword id="KW-0445">Lipid transport</keyword>
<keyword id="KW-0446">Lipid-binding</keyword>
<keyword id="KW-0558">Oxidation</keyword>
<keyword id="KW-0597">Phosphoprotein</keyword>
<keyword id="KW-0677">Repeat</keyword>
<keyword id="KW-0964">Secreted</keyword>
<keyword id="KW-0732">Signal</keyword>
<keyword id="KW-0813">Transport</keyword>
<keyword id="KW-0850">VLDL</keyword>
<proteinExistence type="inferred from homology"/>
<dbReference type="PIR" id="JC5566">
    <property type="entry name" value="JC5566"/>
</dbReference>
<dbReference type="RefSeq" id="XP_027475573.1">
    <property type="nucleotide sequence ID" value="XM_027619772.2"/>
</dbReference>
<dbReference type="RefSeq" id="XP_027475574.1">
    <property type="nucleotide sequence ID" value="XM_027619773.1"/>
</dbReference>
<dbReference type="SMR" id="Q7M2U7"/>
<dbReference type="GeneID" id="113936493"/>
<dbReference type="OrthoDB" id="9048614at2759"/>
<dbReference type="Proteomes" id="UP000515165">
    <property type="component" value="Chromosome 17"/>
</dbReference>
<dbReference type="GO" id="GO:0042627">
    <property type="term" value="C:chylomicron"/>
    <property type="evidence" value="ECO:0007669"/>
    <property type="project" value="UniProtKB-KW"/>
</dbReference>
<dbReference type="GO" id="GO:0070062">
    <property type="term" value="C:extracellular exosome"/>
    <property type="evidence" value="ECO:0000250"/>
    <property type="project" value="UniProtKB"/>
</dbReference>
<dbReference type="GO" id="GO:0031012">
    <property type="term" value="C:extracellular matrix"/>
    <property type="evidence" value="ECO:0000250"/>
    <property type="project" value="UniProtKB"/>
</dbReference>
<dbReference type="GO" id="GO:0005615">
    <property type="term" value="C:extracellular space"/>
    <property type="evidence" value="ECO:0000250"/>
    <property type="project" value="UniProtKB"/>
</dbReference>
<dbReference type="GO" id="GO:0034364">
    <property type="term" value="C:high-density lipoprotein particle"/>
    <property type="evidence" value="ECO:0000250"/>
    <property type="project" value="UniProtKB"/>
</dbReference>
<dbReference type="GO" id="GO:0034363">
    <property type="term" value="C:intermediate-density lipoprotein particle"/>
    <property type="evidence" value="ECO:0000250"/>
    <property type="project" value="UniProtKB"/>
</dbReference>
<dbReference type="GO" id="GO:0034362">
    <property type="term" value="C:low-density lipoprotein particle"/>
    <property type="evidence" value="ECO:0000250"/>
    <property type="project" value="UniProtKB"/>
</dbReference>
<dbReference type="GO" id="GO:0097487">
    <property type="term" value="C:multivesicular body, internal vesicle"/>
    <property type="evidence" value="ECO:0000250"/>
    <property type="project" value="UniProtKB"/>
</dbReference>
<dbReference type="GO" id="GO:0034361">
    <property type="term" value="C:very-low-density lipoprotein particle"/>
    <property type="evidence" value="ECO:0000250"/>
    <property type="project" value="UniProtKB"/>
</dbReference>
<dbReference type="GO" id="GO:0120020">
    <property type="term" value="F:cholesterol transfer activity"/>
    <property type="evidence" value="ECO:0007669"/>
    <property type="project" value="TreeGrafter"/>
</dbReference>
<dbReference type="GO" id="GO:0043395">
    <property type="term" value="F:heparan sulfate proteoglycan binding"/>
    <property type="evidence" value="ECO:0000250"/>
    <property type="project" value="UniProtKB"/>
</dbReference>
<dbReference type="GO" id="GO:0008201">
    <property type="term" value="F:heparin binding"/>
    <property type="evidence" value="ECO:0000250"/>
    <property type="project" value="UniProtKB"/>
</dbReference>
<dbReference type="GO" id="GO:0042802">
    <property type="term" value="F:identical protein binding"/>
    <property type="evidence" value="ECO:0000250"/>
    <property type="project" value="UniProtKB"/>
</dbReference>
<dbReference type="GO" id="GO:0050750">
    <property type="term" value="F:low-density lipoprotein particle receptor binding"/>
    <property type="evidence" value="ECO:0000250"/>
    <property type="project" value="UniProtKB"/>
</dbReference>
<dbReference type="GO" id="GO:0060228">
    <property type="term" value="F:phosphatidylcholine-sterol O-acyltransferase activator activity"/>
    <property type="evidence" value="ECO:0007669"/>
    <property type="project" value="TreeGrafter"/>
</dbReference>
<dbReference type="GO" id="GO:0005543">
    <property type="term" value="F:phospholipid binding"/>
    <property type="evidence" value="ECO:0007669"/>
    <property type="project" value="TreeGrafter"/>
</dbReference>
<dbReference type="GO" id="GO:0055090">
    <property type="term" value="P:acylglycerol homeostasis"/>
    <property type="evidence" value="ECO:0007669"/>
    <property type="project" value="TreeGrafter"/>
</dbReference>
<dbReference type="GO" id="GO:0033344">
    <property type="term" value="P:cholesterol efflux"/>
    <property type="evidence" value="ECO:0000250"/>
    <property type="project" value="UniProtKB"/>
</dbReference>
<dbReference type="GO" id="GO:0008203">
    <property type="term" value="P:cholesterol metabolic process"/>
    <property type="evidence" value="ECO:0007669"/>
    <property type="project" value="TreeGrafter"/>
</dbReference>
<dbReference type="GO" id="GO:0034382">
    <property type="term" value="P:chylomicron remnant clearance"/>
    <property type="evidence" value="ECO:0000250"/>
    <property type="project" value="UniProtKB"/>
</dbReference>
<dbReference type="GO" id="GO:0034380">
    <property type="term" value="P:high-density lipoprotein particle assembly"/>
    <property type="evidence" value="ECO:0000250"/>
    <property type="project" value="UniProtKB"/>
</dbReference>
<dbReference type="GO" id="GO:0071831">
    <property type="term" value="P:intermediate-density lipoprotein particle clearance"/>
    <property type="evidence" value="ECO:0000250"/>
    <property type="project" value="UniProtKB"/>
</dbReference>
<dbReference type="GO" id="GO:0042158">
    <property type="term" value="P:lipoprotein biosynthetic process"/>
    <property type="evidence" value="ECO:0000250"/>
    <property type="project" value="UniProtKB"/>
</dbReference>
<dbReference type="GO" id="GO:0032438">
    <property type="term" value="P:melanosome organization"/>
    <property type="evidence" value="ECO:0000250"/>
    <property type="project" value="UniProtKB"/>
</dbReference>
<dbReference type="GO" id="GO:0033700">
    <property type="term" value="P:phospholipid efflux"/>
    <property type="evidence" value="ECO:0007669"/>
    <property type="project" value="TreeGrafter"/>
</dbReference>
<dbReference type="GO" id="GO:0071830">
    <property type="term" value="P:triglyceride-rich lipoprotein particle clearance"/>
    <property type="evidence" value="ECO:0000250"/>
    <property type="project" value="UniProtKB"/>
</dbReference>
<dbReference type="GO" id="GO:0034447">
    <property type="term" value="P:very-low-density lipoprotein particle clearance"/>
    <property type="evidence" value="ECO:0000250"/>
    <property type="project" value="UniProtKB"/>
</dbReference>
<dbReference type="FunFam" id="1.20.120.20:FF:000002">
    <property type="entry name" value="Apolipoprotein E"/>
    <property type="match status" value="1"/>
</dbReference>
<dbReference type="FunFam" id="1.20.120.20:FF:000003">
    <property type="entry name" value="Apolipoprotein E"/>
    <property type="match status" value="1"/>
</dbReference>
<dbReference type="Gene3D" id="1.20.120.20">
    <property type="entry name" value="Apolipoprotein"/>
    <property type="match status" value="2"/>
</dbReference>
<dbReference type="InterPro" id="IPR000074">
    <property type="entry name" value="ApoA_E"/>
</dbReference>
<dbReference type="InterPro" id="IPR050163">
    <property type="entry name" value="Apolipoprotein_A1/A4/E"/>
</dbReference>
<dbReference type="PANTHER" id="PTHR18976">
    <property type="entry name" value="APOLIPOPROTEIN"/>
    <property type="match status" value="1"/>
</dbReference>
<dbReference type="PANTHER" id="PTHR18976:SF2">
    <property type="entry name" value="APOLIPOPROTEIN E"/>
    <property type="match status" value="1"/>
</dbReference>
<dbReference type="Pfam" id="PF01442">
    <property type="entry name" value="Apolipoprotein"/>
    <property type="match status" value="1"/>
</dbReference>
<dbReference type="SUPFAM" id="SSF58113">
    <property type="entry name" value="Apolipoprotein A-I"/>
    <property type="match status" value="1"/>
</dbReference>
<reference key="1">
    <citation type="journal article" date="1991" name="J. Lipid Res.">
        <title>Lipoproteins in pinnipeds: analysis of a high molecular weight form of apolipoprotein E.</title>
        <authorList>
            <person name="Davis R.W."/>
            <person name="Pierotti V.R."/>
            <person name="Lauer S.J."/>
            <person name="Hubl S.T."/>
            <person name="McLean J.W."/>
            <person name="Witztum J.L."/>
            <person name="Young S.G."/>
        </authorList>
    </citation>
    <scope>NUCLEOTIDE SEQUENCE</scope>
</reference>
<feature type="signal peptide" evidence="3">
    <location>
        <begin position="1"/>
        <end position="18"/>
    </location>
</feature>
<feature type="chain" id="PRO_0000001999" description="Apolipoprotein E">
    <location>
        <begin position="19"/>
        <end position="329"/>
    </location>
</feature>
<feature type="repeat" description="1">
    <location>
        <begin position="92"/>
        <end position="113"/>
    </location>
</feature>
<feature type="repeat" description="2">
    <location>
        <begin position="114"/>
        <end position="135"/>
    </location>
</feature>
<feature type="repeat" description="3">
    <location>
        <begin position="136"/>
        <end position="157"/>
    </location>
</feature>
<feature type="repeat" description="4">
    <location>
        <begin position="158"/>
        <end position="179"/>
    </location>
</feature>
<feature type="repeat" description="5">
    <location>
        <begin position="180"/>
        <end position="201"/>
    </location>
</feature>
<feature type="repeat" description="6">
    <location>
        <begin position="202"/>
        <end position="223"/>
    </location>
</feature>
<feature type="repeat" description="7">
    <location>
        <begin position="224"/>
        <end position="245"/>
    </location>
</feature>
<feature type="repeat" description="8">
    <location>
        <begin position="246"/>
        <end position="267"/>
    </location>
</feature>
<feature type="region of interest" description="8 X 22 AA approximate tandem repeats">
    <location>
        <begin position="92"/>
        <end position="267"/>
    </location>
</feature>
<feature type="region of interest" description="LDL and other lipoprotein receptors binding" evidence="1">
    <location>
        <begin position="170"/>
        <end position="180"/>
    </location>
</feature>
<feature type="region of interest" description="Lipid-binding and lipoprotein association" evidence="1">
    <location>
        <begin position="222"/>
        <end position="302"/>
    </location>
</feature>
<feature type="region of interest" description="Homooligomerization" evidence="1">
    <location>
        <begin position="278"/>
        <end position="329"/>
    </location>
</feature>
<feature type="region of interest" description="Specificity for association with VLDL" evidence="1">
    <location>
        <begin position="290"/>
        <end position="302"/>
    </location>
</feature>
<feature type="binding site" evidence="1">
    <location>
        <begin position="174"/>
        <end position="177"/>
    </location>
    <ligand>
        <name>heparin</name>
        <dbReference type="ChEBI" id="CHEBI:28304"/>
    </ligand>
</feature>
<feature type="binding site" evidence="1">
    <location>
        <begin position="241"/>
        <end position="248"/>
    </location>
    <ligand>
        <name>heparin</name>
        <dbReference type="ChEBI" id="CHEBI:28304"/>
    </ligand>
</feature>
<feature type="modified residue" description="Methionine sulfoxide" evidence="2">
    <location>
        <position position="155"/>
    </location>
</feature>
<feature type="modified residue" description="Phosphoserine" evidence="1">
    <location>
        <position position="159"/>
    </location>
</feature>
<sequence>MKVLWAALVVALLAGCWADVEPESPLEENLEPELEPKRELEQEVEPEAGWQAGQPWELALARFWDYLRWVQTLSDQVQEEVLSNQVTQELTTLMEETMKEIKAYRAELEEQLGPMASETQARVAKELQAAQARLRSDMEDVRTRLSQYRGEVQAMLGQSTEELRARFASHMRKLRKRVLRDAEDLQKRLAVYRAGVREGAERSVSTIRERLWPLLEQARTRHAKVDALATQPLRERVNALGQQLRGRLEEVGSRARSHLDEVREQMEEVQAKMEEQANQMRQQAEAFQARLKGWFEPLVEDMQRQWAVLVEKVQAAVGTSPTTPPVETK</sequence>
<organism>
    <name type="scientific">Zalophus californianus</name>
    <name type="common">California sealion</name>
    <dbReference type="NCBI Taxonomy" id="9704"/>
    <lineage>
        <taxon>Eukaryota</taxon>
        <taxon>Metazoa</taxon>
        <taxon>Chordata</taxon>
        <taxon>Craniata</taxon>
        <taxon>Vertebrata</taxon>
        <taxon>Euteleostomi</taxon>
        <taxon>Mammalia</taxon>
        <taxon>Eutheria</taxon>
        <taxon>Laurasiatheria</taxon>
        <taxon>Carnivora</taxon>
        <taxon>Caniformia</taxon>
        <taxon>Pinnipedia</taxon>
        <taxon>Otariidae</taxon>
        <taxon>Zalophus</taxon>
    </lineage>
</organism>
<evidence type="ECO:0000250" key="1">
    <source>
        <dbReference type="UniProtKB" id="P02649"/>
    </source>
</evidence>
<evidence type="ECO:0000250" key="2">
    <source>
        <dbReference type="UniProtKB" id="P08226"/>
    </source>
</evidence>
<evidence type="ECO:0000255" key="3"/>
<evidence type="ECO:0000305" key="4"/>